<proteinExistence type="evidence at protein level"/>
<dbReference type="EMBL" id="CU329671">
    <property type="protein sequence ID" value="CAA17803.1"/>
    <property type="molecule type" value="Genomic_DNA"/>
</dbReference>
<dbReference type="PIR" id="T40283">
    <property type="entry name" value="T40283"/>
</dbReference>
<dbReference type="RefSeq" id="NP_595227.1">
    <property type="nucleotide sequence ID" value="NM_001021133.2"/>
</dbReference>
<dbReference type="SMR" id="O43017"/>
<dbReference type="BioGRID" id="277445">
    <property type="interactions" value="234"/>
</dbReference>
<dbReference type="ComplexPortal" id="CPX-10325">
    <property type="entry name" value="COMPASS complex"/>
</dbReference>
<dbReference type="FunCoup" id="O43017">
    <property type="interactions" value="7"/>
</dbReference>
<dbReference type="IntAct" id="O43017">
    <property type="interactions" value="3"/>
</dbReference>
<dbReference type="STRING" id="284812.O43017"/>
<dbReference type="iPTMnet" id="O43017"/>
<dbReference type="PaxDb" id="4896-SPBC354.03.1"/>
<dbReference type="EnsemblFungi" id="SPBC354.03.1">
    <property type="protein sequence ID" value="SPBC354.03.1:pep"/>
    <property type="gene ID" value="SPBC354.03"/>
</dbReference>
<dbReference type="GeneID" id="2540929"/>
<dbReference type="KEGG" id="spo:2540929"/>
<dbReference type="PomBase" id="SPBC354.03">
    <property type="gene designation" value="swd3"/>
</dbReference>
<dbReference type="VEuPathDB" id="FungiDB:SPBC354.03"/>
<dbReference type="eggNOG" id="KOG0266">
    <property type="taxonomic scope" value="Eukaryota"/>
</dbReference>
<dbReference type="HOGENOM" id="CLU_000288_57_1_1"/>
<dbReference type="InParanoid" id="O43017"/>
<dbReference type="OMA" id="YDGMARI"/>
<dbReference type="PhylomeDB" id="O43017"/>
<dbReference type="Reactome" id="R-SPO-3214841">
    <property type="pathway name" value="PKMTs methylate histone lysines"/>
</dbReference>
<dbReference type="Reactome" id="R-SPO-3214858">
    <property type="pathway name" value="RMTs methylate histone arginines"/>
</dbReference>
<dbReference type="Reactome" id="R-SPO-8951664">
    <property type="pathway name" value="Neddylation"/>
</dbReference>
<dbReference type="Reactome" id="R-SPO-9772755">
    <property type="pathway name" value="Formation of WDR5-containing histone-modifying complexes"/>
</dbReference>
<dbReference type="PRO" id="PR:O43017"/>
<dbReference type="Proteomes" id="UP000002485">
    <property type="component" value="Chromosome II"/>
</dbReference>
<dbReference type="GO" id="GO:0000785">
    <property type="term" value="C:chromatin"/>
    <property type="evidence" value="ECO:0000305"/>
    <property type="project" value="PomBase"/>
</dbReference>
<dbReference type="GO" id="GO:0005829">
    <property type="term" value="C:cytosol"/>
    <property type="evidence" value="ECO:0007005"/>
    <property type="project" value="PomBase"/>
</dbReference>
<dbReference type="GO" id="GO:0005634">
    <property type="term" value="C:nucleus"/>
    <property type="evidence" value="ECO:0007005"/>
    <property type="project" value="PomBase"/>
</dbReference>
<dbReference type="GO" id="GO:0048188">
    <property type="term" value="C:Set1C/COMPASS complex"/>
    <property type="evidence" value="ECO:0000314"/>
    <property type="project" value="PomBase"/>
</dbReference>
<dbReference type="GO" id="GO:0042393">
    <property type="term" value="F:histone binding"/>
    <property type="evidence" value="ECO:0000318"/>
    <property type="project" value="GO_Central"/>
</dbReference>
<dbReference type="GO" id="GO:0003714">
    <property type="term" value="F:transcription corepressor activity"/>
    <property type="evidence" value="ECO:0007669"/>
    <property type="project" value="InterPro"/>
</dbReference>
<dbReference type="GO" id="GO:0045815">
    <property type="term" value="P:transcription initiation-coupled chromatin remodeling"/>
    <property type="evidence" value="ECO:0000305"/>
    <property type="project" value="PomBase"/>
</dbReference>
<dbReference type="CDD" id="cd00200">
    <property type="entry name" value="WD40"/>
    <property type="match status" value="1"/>
</dbReference>
<dbReference type="FunFam" id="2.130.10.10:FF:000510">
    <property type="entry name" value="WD repeat protein"/>
    <property type="match status" value="1"/>
</dbReference>
<dbReference type="Gene3D" id="2.130.10.10">
    <property type="entry name" value="YVTN repeat-like/Quinoprotein amine dehydrogenase"/>
    <property type="match status" value="1"/>
</dbReference>
<dbReference type="InterPro" id="IPR045183">
    <property type="entry name" value="Ebi-like"/>
</dbReference>
<dbReference type="InterPro" id="IPR020472">
    <property type="entry name" value="G-protein_beta_WD-40_rep"/>
</dbReference>
<dbReference type="InterPro" id="IPR015943">
    <property type="entry name" value="WD40/YVTN_repeat-like_dom_sf"/>
</dbReference>
<dbReference type="InterPro" id="IPR019775">
    <property type="entry name" value="WD40_repeat_CS"/>
</dbReference>
<dbReference type="InterPro" id="IPR036322">
    <property type="entry name" value="WD40_repeat_dom_sf"/>
</dbReference>
<dbReference type="InterPro" id="IPR001680">
    <property type="entry name" value="WD40_rpt"/>
</dbReference>
<dbReference type="PANTHER" id="PTHR22846:SF2">
    <property type="entry name" value="F-BOX-LIKE_WD REPEAT-CONTAINING PROTEIN EBI"/>
    <property type="match status" value="1"/>
</dbReference>
<dbReference type="PANTHER" id="PTHR22846">
    <property type="entry name" value="WD40 REPEAT PROTEIN"/>
    <property type="match status" value="1"/>
</dbReference>
<dbReference type="Pfam" id="PF00400">
    <property type="entry name" value="WD40"/>
    <property type="match status" value="4"/>
</dbReference>
<dbReference type="PRINTS" id="PR00320">
    <property type="entry name" value="GPROTEINBRPT"/>
</dbReference>
<dbReference type="SMART" id="SM00320">
    <property type="entry name" value="WD40"/>
    <property type="match status" value="6"/>
</dbReference>
<dbReference type="SUPFAM" id="SSF50978">
    <property type="entry name" value="WD40 repeat-like"/>
    <property type="match status" value="1"/>
</dbReference>
<dbReference type="PROSITE" id="PS00678">
    <property type="entry name" value="WD_REPEATS_1"/>
    <property type="match status" value="3"/>
</dbReference>
<dbReference type="PROSITE" id="PS50082">
    <property type="entry name" value="WD_REPEATS_2"/>
    <property type="match status" value="5"/>
</dbReference>
<dbReference type="PROSITE" id="PS50294">
    <property type="entry name" value="WD_REPEATS_REGION"/>
    <property type="match status" value="1"/>
</dbReference>
<comment type="function">
    <text evidence="2">The Set1 complex specifically methylates 'Lys-4' of histone H3.</text>
</comment>
<comment type="subunit">
    <text evidence="2 3">Component of the Set1 complex composed of ash2, sdc1, set1, shg1, spp1, swd1, swd2 and swd3.</text>
</comment>
<comment type="subcellular location">
    <subcellularLocation>
        <location evidence="5">Nucleus</location>
    </subcellularLocation>
</comment>
<reference evidence="6" key="1">
    <citation type="journal article" date="2002" name="Nature">
        <title>The genome sequence of Schizosaccharomyces pombe.</title>
        <authorList>
            <person name="Wood V."/>
            <person name="Gwilliam R."/>
            <person name="Rajandream M.A."/>
            <person name="Lyne M.H."/>
            <person name="Lyne R."/>
            <person name="Stewart A."/>
            <person name="Sgouros J.G."/>
            <person name="Peat N."/>
            <person name="Hayles J."/>
            <person name="Baker S.G."/>
            <person name="Basham D."/>
            <person name="Bowman S."/>
            <person name="Brooks K."/>
            <person name="Brown D."/>
            <person name="Brown S."/>
            <person name="Chillingworth T."/>
            <person name="Churcher C.M."/>
            <person name="Collins M."/>
            <person name="Connor R."/>
            <person name="Cronin A."/>
            <person name="Davis P."/>
            <person name="Feltwell T."/>
            <person name="Fraser A."/>
            <person name="Gentles S."/>
            <person name="Goble A."/>
            <person name="Hamlin N."/>
            <person name="Harris D.E."/>
            <person name="Hidalgo J."/>
            <person name="Hodgson G."/>
            <person name="Holroyd S."/>
            <person name="Hornsby T."/>
            <person name="Howarth S."/>
            <person name="Huckle E.J."/>
            <person name="Hunt S."/>
            <person name="Jagels K."/>
            <person name="James K.D."/>
            <person name="Jones L."/>
            <person name="Jones M."/>
            <person name="Leather S."/>
            <person name="McDonald S."/>
            <person name="McLean J."/>
            <person name="Mooney P."/>
            <person name="Moule S."/>
            <person name="Mungall K.L."/>
            <person name="Murphy L.D."/>
            <person name="Niblett D."/>
            <person name="Odell C."/>
            <person name="Oliver K."/>
            <person name="O'Neil S."/>
            <person name="Pearson D."/>
            <person name="Quail M.A."/>
            <person name="Rabbinowitsch E."/>
            <person name="Rutherford K.M."/>
            <person name="Rutter S."/>
            <person name="Saunders D."/>
            <person name="Seeger K."/>
            <person name="Sharp S."/>
            <person name="Skelton J."/>
            <person name="Simmonds M.N."/>
            <person name="Squares R."/>
            <person name="Squares S."/>
            <person name="Stevens K."/>
            <person name="Taylor K."/>
            <person name="Taylor R.G."/>
            <person name="Tivey A."/>
            <person name="Walsh S.V."/>
            <person name="Warren T."/>
            <person name="Whitehead S."/>
            <person name="Woodward J.R."/>
            <person name="Volckaert G."/>
            <person name="Aert R."/>
            <person name="Robben J."/>
            <person name="Grymonprez B."/>
            <person name="Weltjens I."/>
            <person name="Vanstreels E."/>
            <person name="Rieger M."/>
            <person name="Schaefer M."/>
            <person name="Mueller-Auer S."/>
            <person name="Gabel C."/>
            <person name="Fuchs M."/>
            <person name="Duesterhoeft A."/>
            <person name="Fritzc C."/>
            <person name="Holzer E."/>
            <person name="Moestl D."/>
            <person name="Hilbert H."/>
            <person name="Borzym K."/>
            <person name="Langer I."/>
            <person name="Beck A."/>
            <person name="Lehrach H."/>
            <person name="Reinhardt R."/>
            <person name="Pohl T.M."/>
            <person name="Eger P."/>
            <person name="Zimmermann W."/>
            <person name="Wedler H."/>
            <person name="Wambutt R."/>
            <person name="Purnelle B."/>
            <person name="Goffeau A."/>
            <person name="Cadieu E."/>
            <person name="Dreano S."/>
            <person name="Gloux S."/>
            <person name="Lelaure V."/>
            <person name="Mottier S."/>
            <person name="Galibert F."/>
            <person name="Aves S.J."/>
            <person name="Xiang Z."/>
            <person name="Hunt C."/>
            <person name="Moore K."/>
            <person name="Hurst S.M."/>
            <person name="Lucas M."/>
            <person name="Rochet M."/>
            <person name="Gaillardin C."/>
            <person name="Tallada V.A."/>
            <person name="Garzon A."/>
            <person name="Thode G."/>
            <person name="Daga R.R."/>
            <person name="Cruzado L."/>
            <person name="Jimenez J."/>
            <person name="Sanchez M."/>
            <person name="del Rey F."/>
            <person name="Benito J."/>
            <person name="Dominguez A."/>
            <person name="Revuelta J.L."/>
            <person name="Moreno S."/>
            <person name="Armstrong J."/>
            <person name="Forsburg S.L."/>
            <person name="Cerutti L."/>
            <person name="Lowe T."/>
            <person name="McCombie W.R."/>
            <person name="Paulsen I."/>
            <person name="Potashkin J."/>
            <person name="Shpakovski G.V."/>
            <person name="Ussery D."/>
            <person name="Barrell B.G."/>
            <person name="Nurse P."/>
        </authorList>
    </citation>
    <scope>NUCLEOTIDE SEQUENCE [LARGE SCALE GENOMIC DNA]</scope>
    <source>
        <strain>972 / ATCC 24843</strain>
    </source>
</reference>
<reference evidence="5" key="2">
    <citation type="journal article" date="2003" name="J. Biol. Chem.">
        <title>High conservation of the Set1/Rad6 axis of histone 3 lysine 4 methylation in budding and fission yeasts.</title>
        <authorList>
            <person name="Roguev A."/>
            <person name="Schaft D."/>
            <person name="Shevchenko A."/>
            <person name="Aasland R."/>
            <person name="Shevchenko A."/>
            <person name="Stewart A.F."/>
        </authorList>
    </citation>
    <scope>FUNCTION</scope>
    <scope>IDENTIFICATION IN THE SET1 COMPLEX</scope>
</reference>
<reference evidence="5" key="3">
    <citation type="journal article" date="2004" name="Mol. Cell. Proteomics">
        <title>A comparative analysis of an orthologous proteomic environment in the yeasts Saccharomyces cerevisiae and Schizosaccharomyces pombe.</title>
        <authorList>
            <person name="Roguev A."/>
            <person name="Shevchenko A."/>
            <person name="Schaft D."/>
            <person name="Thomas H."/>
            <person name="Stewart A.F."/>
            <person name="Shevchenko A."/>
        </authorList>
    </citation>
    <scope>IDENTIFICATION IN THE SET1 COMPLEX</scope>
</reference>
<reference key="4">
    <citation type="journal article" date="2008" name="J. Proteome Res.">
        <title>Phosphoproteome analysis of fission yeast.</title>
        <authorList>
            <person name="Wilson-Grady J.T."/>
            <person name="Villen J."/>
            <person name="Gygi S.P."/>
        </authorList>
    </citation>
    <scope>PHOSPHORYLATION [LARGE SCALE ANALYSIS] AT SER-379</scope>
    <scope>IDENTIFICATION BY MASS SPECTROMETRY</scope>
</reference>
<evidence type="ECO:0000255" key="1"/>
<evidence type="ECO:0000269" key="2">
    <source>
    </source>
</evidence>
<evidence type="ECO:0000269" key="3">
    <source>
    </source>
</evidence>
<evidence type="ECO:0000269" key="4">
    <source>
    </source>
</evidence>
<evidence type="ECO:0000305" key="5"/>
<evidence type="ECO:0000312" key="6">
    <source>
        <dbReference type="EMBL" id="CAA17803.1"/>
    </source>
</evidence>
<keyword id="KW-0539">Nucleus</keyword>
<keyword id="KW-0597">Phosphoprotein</keyword>
<keyword id="KW-1185">Reference proteome</keyword>
<keyword id="KW-0677">Repeat</keyword>
<keyword id="KW-0853">WD repeat</keyword>
<feature type="chain" id="PRO_0000051254" description="Set1 complex component swd3">
    <location>
        <begin position="1"/>
        <end position="380"/>
    </location>
</feature>
<feature type="repeat" description="WD 1" evidence="1">
    <location>
        <begin position="52"/>
        <end position="91"/>
    </location>
</feature>
<feature type="repeat" description="WD 2" evidence="1">
    <location>
        <begin position="94"/>
        <end position="133"/>
    </location>
</feature>
<feature type="repeat" description="WD 3" evidence="1">
    <location>
        <begin position="136"/>
        <end position="177"/>
    </location>
</feature>
<feature type="repeat" description="WD 4" evidence="1">
    <location>
        <begin position="179"/>
        <end position="219"/>
    </location>
</feature>
<feature type="repeat" description="WD 5" evidence="1">
    <location>
        <begin position="221"/>
        <end position="262"/>
    </location>
</feature>
<feature type="repeat" description="WD 6" evidence="1">
    <location>
        <begin position="291"/>
        <end position="330"/>
    </location>
</feature>
<feature type="repeat" description="WD 7" evidence="1">
    <location>
        <begin position="335"/>
        <end position="374"/>
    </location>
</feature>
<feature type="modified residue" description="Phosphoserine" evidence="4">
    <location>
        <position position="379"/>
    </location>
</feature>
<sequence length="380" mass="42980">MDSTAQQFPLNHDLQVQKDQKGVVEEDEEQIHKRIRNYESHSGFSEYCTLFGHEKSVTCVSVSPNKRWIATSSSDGTIKIWSALTFRLECTLFGHYRGISQVKWATGSKYLASASDDKTIRIWDFEKRCSVRCLKGHTNYVSSIDFNPLGTLLVSGSWDETVRIWNLQDGTCLRMLPAHSEPIISVSISADGTLCATASYDGMARIWDVLSGQCLKTLVEPINVPLSNLQFTENRKYLLVSNLNSQIRLWDYRRNRVVRIFDSHVNTRYSMSWDCYSSKNIPKNTEALPNNDSSYPDDAESFMHDAYLLIPSEDGTIQITDPSTKIIIDDSIRHSDDPETSLLNVTSLGPFIITSGTDPYVRVWAPSLLLSKHEKDGFSP</sequence>
<organism>
    <name type="scientific">Schizosaccharomyces pombe (strain 972 / ATCC 24843)</name>
    <name type="common">Fission yeast</name>
    <dbReference type="NCBI Taxonomy" id="284812"/>
    <lineage>
        <taxon>Eukaryota</taxon>
        <taxon>Fungi</taxon>
        <taxon>Dikarya</taxon>
        <taxon>Ascomycota</taxon>
        <taxon>Taphrinomycotina</taxon>
        <taxon>Schizosaccharomycetes</taxon>
        <taxon>Schizosaccharomycetales</taxon>
        <taxon>Schizosaccharomycetaceae</taxon>
        <taxon>Schizosaccharomyces</taxon>
    </lineage>
</organism>
<name>SWD3_SCHPO</name>
<protein>
    <recommendedName>
        <fullName>Set1 complex component swd3</fullName>
        <shortName>Set1C component swd3</shortName>
    </recommendedName>
    <alternativeName>
        <fullName>COMPASS component swd3</fullName>
    </alternativeName>
    <alternativeName>
        <fullName>Complex proteins associated with set1 protein swd3</fullName>
    </alternativeName>
</protein>
<accession>O43017</accession>
<gene>
    <name evidence="6" type="primary">swd3</name>
    <name type="ORF">SPBC354.03</name>
</gene>